<organism>
    <name type="scientific">Shewanella woodyi (strain ATCC 51908 / MS32)</name>
    <dbReference type="NCBI Taxonomy" id="392500"/>
    <lineage>
        <taxon>Bacteria</taxon>
        <taxon>Pseudomonadati</taxon>
        <taxon>Pseudomonadota</taxon>
        <taxon>Gammaproteobacteria</taxon>
        <taxon>Alteromonadales</taxon>
        <taxon>Shewanellaceae</taxon>
        <taxon>Shewanella</taxon>
    </lineage>
</organism>
<reference key="1">
    <citation type="submission" date="2008-02" db="EMBL/GenBank/DDBJ databases">
        <title>Complete sequence of Shewanella woodyi ATCC 51908.</title>
        <authorList>
            <consortium name="US DOE Joint Genome Institute"/>
            <person name="Copeland A."/>
            <person name="Lucas S."/>
            <person name="Lapidus A."/>
            <person name="Glavina del Rio T."/>
            <person name="Dalin E."/>
            <person name="Tice H."/>
            <person name="Bruce D."/>
            <person name="Goodwin L."/>
            <person name="Pitluck S."/>
            <person name="Sims D."/>
            <person name="Brettin T."/>
            <person name="Detter J.C."/>
            <person name="Han C."/>
            <person name="Kuske C.R."/>
            <person name="Schmutz J."/>
            <person name="Larimer F."/>
            <person name="Land M."/>
            <person name="Hauser L."/>
            <person name="Kyrpides N."/>
            <person name="Lykidis A."/>
            <person name="Zhao J.-S."/>
            <person name="Richardson P."/>
        </authorList>
    </citation>
    <scope>NUCLEOTIDE SEQUENCE [LARGE SCALE GENOMIC DNA]</scope>
    <source>
        <strain>ATCC 51908 / MS32</strain>
    </source>
</reference>
<gene>
    <name type="ordered locus">Swoo_0351</name>
</gene>
<name>Y351_SHEWM</name>
<feature type="chain" id="PRO_1000091265" description="UPF0102 protein Swoo_0351">
    <location>
        <begin position="1"/>
        <end position="117"/>
    </location>
</feature>
<accession>B1KP82</accession>
<comment type="similarity">
    <text evidence="1">Belongs to the UPF0102 family.</text>
</comment>
<evidence type="ECO:0000255" key="1">
    <source>
        <dbReference type="HAMAP-Rule" id="MF_00048"/>
    </source>
</evidence>
<protein>
    <recommendedName>
        <fullName evidence="1">UPF0102 protein Swoo_0351</fullName>
    </recommendedName>
</protein>
<proteinExistence type="inferred from homology"/>
<dbReference type="EMBL" id="CP000961">
    <property type="protein sequence ID" value="ACA84652.1"/>
    <property type="molecule type" value="Genomic_DNA"/>
</dbReference>
<dbReference type="RefSeq" id="WP_012323001.1">
    <property type="nucleotide sequence ID" value="NC_010506.1"/>
</dbReference>
<dbReference type="SMR" id="B1KP82"/>
<dbReference type="STRING" id="392500.Swoo_0351"/>
<dbReference type="KEGG" id="swd:Swoo_0351"/>
<dbReference type="eggNOG" id="COG0792">
    <property type="taxonomic scope" value="Bacteria"/>
</dbReference>
<dbReference type="HOGENOM" id="CLU_115353_1_0_6"/>
<dbReference type="Proteomes" id="UP000002168">
    <property type="component" value="Chromosome"/>
</dbReference>
<dbReference type="GO" id="GO:0003676">
    <property type="term" value="F:nucleic acid binding"/>
    <property type="evidence" value="ECO:0007669"/>
    <property type="project" value="InterPro"/>
</dbReference>
<dbReference type="Gene3D" id="3.40.1350.10">
    <property type="match status" value="1"/>
</dbReference>
<dbReference type="HAMAP" id="MF_00048">
    <property type="entry name" value="UPF0102"/>
    <property type="match status" value="1"/>
</dbReference>
<dbReference type="InterPro" id="IPR011335">
    <property type="entry name" value="Restrct_endonuc-II-like"/>
</dbReference>
<dbReference type="InterPro" id="IPR011856">
    <property type="entry name" value="tRNA_endonuc-like_dom_sf"/>
</dbReference>
<dbReference type="InterPro" id="IPR003509">
    <property type="entry name" value="UPF0102_YraN-like"/>
</dbReference>
<dbReference type="NCBIfam" id="NF009150">
    <property type="entry name" value="PRK12497.1-3"/>
    <property type="match status" value="1"/>
</dbReference>
<dbReference type="NCBIfam" id="TIGR00252">
    <property type="entry name" value="YraN family protein"/>
    <property type="match status" value="1"/>
</dbReference>
<dbReference type="PANTHER" id="PTHR34039">
    <property type="entry name" value="UPF0102 PROTEIN YRAN"/>
    <property type="match status" value="1"/>
</dbReference>
<dbReference type="PANTHER" id="PTHR34039:SF1">
    <property type="entry name" value="UPF0102 PROTEIN YRAN"/>
    <property type="match status" value="1"/>
</dbReference>
<dbReference type="Pfam" id="PF02021">
    <property type="entry name" value="UPF0102"/>
    <property type="match status" value="1"/>
</dbReference>
<dbReference type="SUPFAM" id="SSF52980">
    <property type="entry name" value="Restriction endonuclease-like"/>
    <property type="match status" value="1"/>
</dbReference>
<sequence length="117" mass="13467">MIDNKHQIPREHGQAGEKLAMNYLAERGLNFVEANVRYKFGEIDLIMKDGKEWIFIEVKYRSKAQYGGALNALSPAQIGRLRRAAEHYIQIHKIDAVCRFDLIAIDASQIHWLPNAF</sequence>
<keyword id="KW-1185">Reference proteome</keyword>